<protein>
    <recommendedName>
        <fullName>Putative formate dehydrogenase SAB2186c</fullName>
        <ecNumber>1.17.1.9</ecNumber>
    </recommendedName>
</protein>
<proteinExistence type="inferred from homology"/>
<reference key="1">
    <citation type="journal article" date="2007" name="PLoS ONE">
        <title>Molecular correlates of host specialization in Staphylococcus aureus.</title>
        <authorList>
            <person name="Herron-Olson L."/>
            <person name="Fitzgerald J.R."/>
            <person name="Musser J.M."/>
            <person name="Kapur V."/>
        </authorList>
    </citation>
    <scope>NUCLEOTIDE SEQUENCE [LARGE SCALE GENOMIC DNA]</scope>
    <source>
        <strain>bovine RF122 / ET3-1</strain>
    </source>
</reference>
<name>FDHL_STAAB</name>
<dbReference type="EC" id="1.17.1.9"/>
<dbReference type="EMBL" id="AJ938182">
    <property type="protein sequence ID" value="CAI81875.1"/>
    <property type="molecule type" value="Genomic_DNA"/>
</dbReference>
<dbReference type="RefSeq" id="WP_001155290.1">
    <property type="nucleotide sequence ID" value="NC_007622.1"/>
</dbReference>
<dbReference type="SMR" id="Q2YYT1"/>
<dbReference type="KEGG" id="sab:SAB2186c"/>
<dbReference type="HOGENOM" id="CLU_000422_2_1_9"/>
<dbReference type="GO" id="GO:0016020">
    <property type="term" value="C:membrane"/>
    <property type="evidence" value="ECO:0007669"/>
    <property type="project" value="TreeGrafter"/>
</dbReference>
<dbReference type="GO" id="GO:0051537">
    <property type="term" value="F:2 iron, 2 sulfur cluster binding"/>
    <property type="evidence" value="ECO:0007669"/>
    <property type="project" value="UniProtKB-KW"/>
</dbReference>
<dbReference type="GO" id="GO:0051539">
    <property type="term" value="F:4 iron, 4 sulfur cluster binding"/>
    <property type="evidence" value="ECO:0007669"/>
    <property type="project" value="UniProtKB-KW"/>
</dbReference>
<dbReference type="GO" id="GO:0008863">
    <property type="term" value="F:formate dehydrogenase (NAD+) activity"/>
    <property type="evidence" value="ECO:0007669"/>
    <property type="project" value="UniProtKB-EC"/>
</dbReference>
<dbReference type="GO" id="GO:0046872">
    <property type="term" value="F:metal ion binding"/>
    <property type="evidence" value="ECO:0007669"/>
    <property type="project" value="UniProtKB-KW"/>
</dbReference>
<dbReference type="GO" id="GO:0043546">
    <property type="term" value="F:molybdopterin cofactor binding"/>
    <property type="evidence" value="ECO:0007669"/>
    <property type="project" value="InterPro"/>
</dbReference>
<dbReference type="GO" id="GO:0003954">
    <property type="term" value="F:NADH dehydrogenase activity"/>
    <property type="evidence" value="ECO:0007669"/>
    <property type="project" value="TreeGrafter"/>
</dbReference>
<dbReference type="GO" id="GO:0015942">
    <property type="term" value="P:formate metabolic process"/>
    <property type="evidence" value="ECO:0007669"/>
    <property type="project" value="InterPro"/>
</dbReference>
<dbReference type="GO" id="GO:0022904">
    <property type="term" value="P:respiratory electron transport chain"/>
    <property type="evidence" value="ECO:0007669"/>
    <property type="project" value="TreeGrafter"/>
</dbReference>
<dbReference type="CDD" id="cd00207">
    <property type="entry name" value="fer2"/>
    <property type="match status" value="1"/>
</dbReference>
<dbReference type="CDD" id="cd02792">
    <property type="entry name" value="MopB_CT_Formate-Dh-Na-like"/>
    <property type="match status" value="1"/>
</dbReference>
<dbReference type="CDD" id="cd02753">
    <property type="entry name" value="MopB_Formate-Dh-H"/>
    <property type="match status" value="1"/>
</dbReference>
<dbReference type="FunFam" id="2.20.25.90:FF:000001">
    <property type="entry name" value="Formate dehydrogenase subunit alpha"/>
    <property type="match status" value="1"/>
</dbReference>
<dbReference type="FunFam" id="3.10.20.740:FF:000003">
    <property type="entry name" value="Formate dehydrogenase subunit alpha"/>
    <property type="match status" value="1"/>
</dbReference>
<dbReference type="FunFam" id="3.40.228.10:FF:000002">
    <property type="entry name" value="Formate dehydrogenase subunit alpha"/>
    <property type="match status" value="1"/>
</dbReference>
<dbReference type="FunFam" id="3.30.70.20:FF:000032">
    <property type="entry name" value="Formate dehydrogenase, alpha subunit"/>
    <property type="match status" value="1"/>
</dbReference>
<dbReference type="FunFam" id="2.40.40.20:FF:000005">
    <property type="entry name" value="Periplasmic nitrate reductase"/>
    <property type="match status" value="1"/>
</dbReference>
<dbReference type="Gene3D" id="2.40.40.20">
    <property type="match status" value="1"/>
</dbReference>
<dbReference type="Gene3D" id="3.10.20.740">
    <property type="match status" value="1"/>
</dbReference>
<dbReference type="Gene3D" id="3.30.70.20">
    <property type="match status" value="1"/>
</dbReference>
<dbReference type="Gene3D" id="3.40.50.740">
    <property type="match status" value="1"/>
</dbReference>
<dbReference type="Gene3D" id="2.20.25.90">
    <property type="entry name" value="ADC-like domains"/>
    <property type="match status" value="1"/>
</dbReference>
<dbReference type="Gene3D" id="3.40.228.10">
    <property type="entry name" value="Dimethylsulfoxide Reductase, domain 2"/>
    <property type="match status" value="1"/>
</dbReference>
<dbReference type="InterPro" id="IPR036010">
    <property type="entry name" value="2Fe-2S_ferredoxin-like_sf"/>
</dbReference>
<dbReference type="InterPro" id="IPR001041">
    <property type="entry name" value="2Fe-2S_ferredoxin-type"/>
</dbReference>
<dbReference type="InterPro" id="IPR017896">
    <property type="entry name" value="4Fe4S_Fe-S-bd"/>
</dbReference>
<dbReference type="InterPro" id="IPR017900">
    <property type="entry name" value="4Fe4S_Fe_S_CS"/>
</dbReference>
<dbReference type="InterPro" id="IPR009010">
    <property type="entry name" value="Asp_de-COase-like_dom_sf"/>
</dbReference>
<dbReference type="InterPro" id="IPR041924">
    <property type="entry name" value="Formate_Dh-H_N"/>
</dbReference>
<dbReference type="InterPro" id="IPR006478">
    <property type="entry name" value="Formate_DH_asu"/>
</dbReference>
<dbReference type="InterPro" id="IPR006657">
    <property type="entry name" value="MoPterin_dinucl-bd_dom"/>
</dbReference>
<dbReference type="InterPro" id="IPR006656">
    <property type="entry name" value="Mopterin_OxRdtase"/>
</dbReference>
<dbReference type="InterPro" id="IPR006963">
    <property type="entry name" value="Mopterin_OxRdtase_4Fe-4S_dom"/>
</dbReference>
<dbReference type="InterPro" id="IPR006655">
    <property type="entry name" value="Mopterin_OxRdtase_prok_CS"/>
</dbReference>
<dbReference type="InterPro" id="IPR027467">
    <property type="entry name" value="MopterinOxRdtase_cofactor_BS"/>
</dbReference>
<dbReference type="InterPro" id="IPR019574">
    <property type="entry name" value="NADH_UbQ_OxRdtase_Gsu_4Fe4S-bd"/>
</dbReference>
<dbReference type="InterPro" id="IPR050123">
    <property type="entry name" value="Prok_molybdopt-oxidoreductase"/>
</dbReference>
<dbReference type="NCBIfam" id="TIGR01591">
    <property type="entry name" value="Fdh-alpha"/>
    <property type="match status" value="1"/>
</dbReference>
<dbReference type="PANTHER" id="PTHR43105:SF14">
    <property type="entry name" value="FORMATE DEHYDROGENASE H"/>
    <property type="match status" value="1"/>
</dbReference>
<dbReference type="PANTHER" id="PTHR43105">
    <property type="entry name" value="RESPIRATORY NITRATE REDUCTASE"/>
    <property type="match status" value="1"/>
</dbReference>
<dbReference type="Pfam" id="PF13510">
    <property type="entry name" value="Fer2_4"/>
    <property type="match status" value="1"/>
</dbReference>
<dbReference type="Pfam" id="PF12838">
    <property type="entry name" value="Fer4_7"/>
    <property type="match status" value="1"/>
</dbReference>
<dbReference type="Pfam" id="PF04879">
    <property type="entry name" value="Molybdop_Fe4S4"/>
    <property type="match status" value="1"/>
</dbReference>
<dbReference type="Pfam" id="PF00384">
    <property type="entry name" value="Molybdopterin"/>
    <property type="match status" value="1"/>
</dbReference>
<dbReference type="Pfam" id="PF01568">
    <property type="entry name" value="Molydop_binding"/>
    <property type="match status" value="1"/>
</dbReference>
<dbReference type="Pfam" id="PF10588">
    <property type="entry name" value="NADH-G_4Fe-4S_3"/>
    <property type="match status" value="1"/>
</dbReference>
<dbReference type="PIRSF" id="PIRSF036643">
    <property type="entry name" value="FDH_alpha"/>
    <property type="match status" value="1"/>
</dbReference>
<dbReference type="SMART" id="SM00926">
    <property type="entry name" value="Molybdop_Fe4S4"/>
    <property type="match status" value="1"/>
</dbReference>
<dbReference type="SMART" id="SM00929">
    <property type="entry name" value="NADH-G_4Fe-4S_3"/>
    <property type="match status" value="1"/>
</dbReference>
<dbReference type="SUPFAM" id="SSF54292">
    <property type="entry name" value="2Fe-2S ferredoxin-like"/>
    <property type="match status" value="1"/>
</dbReference>
<dbReference type="SUPFAM" id="SSF54862">
    <property type="entry name" value="4Fe-4S ferredoxins"/>
    <property type="match status" value="1"/>
</dbReference>
<dbReference type="SUPFAM" id="SSF50692">
    <property type="entry name" value="ADC-like"/>
    <property type="match status" value="1"/>
</dbReference>
<dbReference type="SUPFAM" id="SSF53706">
    <property type="entry name" value="Formate dehydrogenase/DMSO reductase, domains 1-3"/>
    <property type="match status" value="1"/>
</dbReference>
<dbReference type="PROSITE" id="PS51085">
    <property type="entry name" value="2FE2S_FER_2"/>
    <property type="match status" value="1"/>
</dbReference>
<dbReference type="PROSITE" id="PS00198">
    <property type="entry name" value="4FE4S_FER_1"/>
    <property type="match status" value="1"/>
</dbReference>
<dbReference type="PROSITE" id="PS51379">
    <property type="entry name" value="4FE4S_FER_2"/>
    <property type="match status" value="2"/>
</dbReference>
<dbReference type="PROSITE" id="PS51839">
    <property type="entry name" value="4FE4S_HC3"/>
    <property type="match status" value="1"/>
</dbReference>
<dbReference type="PROSITE" id="PS51669">
    <property type="entry name" value="4FE4S_MOW_BIS_MGD"/>
    <property type="match status" value="1"/>
</dbReference>
<dbReference type="PROSITE" id="PS00551">
    <property type="entry name" value="MOLYBDOPTERIN_PROK_1"/>
    <property type="match status" value="1"/>
</dbReference>
<dbReference type="PROSITE" id="PS00932">
    <property type="entry name" value="MOLYBDOPTERIN_PROK_3"/>
    <property type="match status" value="1"/>
</dbReference>
<feature type="chain" id="PRO_0000304128" description="Putative formate dehydrogenase SAB2186c">
    <location>
        <begin position="1"/>
        <end position="984"/>
    </location>
</feature>
<feature type="domain" description="2Fe-2S ferredoxin-type" evidence="2">
    <location>
        <begin position="3"/>
        <end position="79"/>
    </location>
</feature>
<feature type="domain" description="4Fe-4S His(Cys)3-ligated-type" evidence="5">
    <location>
        <begin position="79"/>
        <end position="119"/>
    </location>
</feature>
<feature type="domain" description="4Fe-4S ferredoxin-type 1" evidence="3">
    <location>
        <begin position="138"/>
        <end position="165"/>
    </location>
</feature>
<feature type="domain" description="4Fe-4S ferredoxin-type 2" evidence="3">
    <location>
        <begin position="181"/>
        <end position="211"/>
    </location>
</feature>
<feature type="domain" description="4Fe-4S Mo/W bis-MGD-type" evidence="4">
    <location>
        <begin position="257"/>
        <end position="313"/>
    </location>
</feature>
<feature type="region of interest" description="Formate dehydrogenase">
    <location>
        <begin position="252"/>
        <end position="984"/>
    </location>
</feature>
<feature type="binding site" evidence="1">
    <location>
        <position position="37"/>
    </location>
    <ligand>
        <name>[2Fe-2S] cluster</name>
        <dbReference type="ChEBI" id="CHEBI:190135"/>
    </ligand>
</feature>
<feature type="binding site" evidence="1">
    <location>
        <position position="48"/>
    </location>
    <ligand>
        <name>[2Fe-2S] cluster</name>
        <dbReference type="ChEBI" id="CHEBI:190135"/>
    </ligand>
</feature>
<feature type="binding site" evidence="1">
    <location>
        <position position="51"/>
    </location>
    <ligand>
        <name>[2Fe-2S] cluster</name>
        <dbReference type="ChEBI" id="CHEBI:190135"/>
    </ligand>
</feature>
<feature type="binding site" evidence="1">
    <location>
        <position position="63"/>
    </location>
    <ligand>
        <name>[2Fe-2S] cluster</name>
        <dbReference type="ChEBI" id="CHEBI:190135"/>
    </ligand>
</feature>
<feature type="binding site" evidence="5">
    <location>
        <position position="95"/>
    </location>
    <ligand>
        <name>[4Fe-4S] cluster</name>
        <dbReference type="ChEBI" id="CHEBI:49883"/>
        <label>1</label>
    </ligand>
</feature>
<feature type="binding site" evidence="5">
    <location>
        <position position="99"/>
    </location>
    <ligand>
        <name>[4Fe-4S] cluster</name>
        <dbReference type="ChEBI" id="CHEBI:49883"/>
        <label>1</label>
    </ligand>
</feature>
<feature type="binding site" evidence="5">
    <location>
        <position position="102"/>
    </location>
    <ligand>
        <name>[4Fe-4S] cluster</name>
        <dbReference type="ChEBI" id="CHEBI:49883"/>
        <label>1</label>
    </ligand>
</feature>
<feature type="binding site" evidence="5">
    <location>
        <position position="109"/>
    </location>
    <ligand>
        <name>[4Fe-4S] cluster</name>
        <dbReference type="ChEBI" id="CHEBI:49883"/>
        <label>1</label>
    </ligand>
</feature>
<feature type="binding site" evidence="1">
    <location>
        <position position="147"/>
    </location>
    <ligand>
        <name>[4Fe-4S] cluster</name>
        <dbReference type="ChEBI" id="CHEBI:49883"/>
        <label>2</label>
    </ligand>
</feature>
<feature type="binding site" evidence="1">
    <location>
        <position position="150"/>
    </location>
    <ligand>
        <name>[4Fe-4S] cluster</name>
        <dbReference type="ChEBI" id="CHEBI:49883"/>
        <label>2</label>
    </ligand>
</feature>
<feature type="binding site" evidence="1">
    <location>
        <position position="153"/>
    </location>
    <ligand>
        <name>[4Fe-4S] cluster</name>
        <dbReference type="ChEBI" id="CHEBI:49883"/>
        <label>2</label>
    </ligand>
</feature>
<feature type="binding site" evidence="1">
    <location>
        <position position="157"/>
    </location>
    <ligand>
        <name>[4Fe-4S] cluster</name>
        <dbReference type="ChEBI" id="CHEBI:49883"/>
        <label>3</label>
    </ligand>
</feature>
<feature type="binding site" evidence="1">
    <location>
        <position position="190"/>
    </location>
    <ligand>
        <name>[4Fe-4S] cluster</name>
        <dbReference type="ChEBI" id="CHEBI:49883"/>
        <label>3</label>
    </ligand>
</feature>
<feature type="binding site" evidence="1">
    <location>
        <position position="193"/>
    </location>
    <ligand>
        <name>[4Fe-4S] cluster</name>
        <dbReference type="ChEBI" id="CHEBI:49883"/>
        <label>3</label>
    </ligand>
</feature>
<feature type="binding site" evidence="1">
    <location>
        <position position="196"/>
    </location>
    <ligand>
        <name>[4Fe-4S] cluster</name>
        <dbReference type="ChEBI" id="CHEBI:49883"/>
        <label>3</label>
    </ligand>
</feature>
<feature type="binding site" evidence="1">
    <location>
        <position position="200"/>
    </location>
    <ligand>
        <name>[4Fe-4S] cluster</name>
        <dbReference type="ChEBI" id="CHEBI:49883"/>
        <label>2</label>
    </ligand>
</feature>
<feature type="binding site" evidence="1">
    <location>
        <position position="264"/>
    </location>
    <ligand>
        <name>[4Fe-4S] cluster</name>
        <dbReference type="ChEBI" id="CHEBI:49883"/>
        <label>4</label>
    </ligand>
</feature>
<feature type="binding site" evidence="1">
    <location>
        <position position="267"/>
    </location>
    <ligand>
        <name>[4Fe-4S] cluster</name>
        <dbReference type="ChEBI" id="CHEBI:49883"/>
        <label>4</label>
    </ligand>
</feature>
<feature type="binding site" evidence="1">
    <location>
        <position position="271"/>
    </location>
    <ligand>
        <name>[4Fe-4S] cluster</name>
        <dbReference type="ChEBI" id="CHEBI:49883"/>
        <label>4</label>
    </ligand>
</feature>
<feature type="binding site" evidence="1">
    <location>
        <position position="299"/>
    </location>
    <ligand>
        <name>[4Fe-4S] cluster</name>
        <dbReference type="ChEBI" id="CHEBI:49883"/>
        <label>4</label>
    </ligand>
</feature>
<keyword id="KW-0001">2Fe-2S</keyword>
<keyword id="KW-0004">4Fe-4S</keyword>
<keyword id="KW-0408">Iron</keyword>
<keyword id="KW-0411">Iron-sulfur</keyword>
<keyword id="KW-0479">Metal-binding</keyword>
<keyword id="KW-0500">Molybdenum</keyword>
<keyword id="KW-0520">NAD</keyword>
<keyword id="KW-0560">Oxidoreductase</keyword>
<keyword id="KW-0677">Repeat</keyword>
<accession>Q2YYT1</accession>
<comment type="catalytic activity">
    <reaction>
        <text>formate + NAD(+) = CO2 + NADH</text>
        <dbReference type="Rhea" id="RHEA:15985"/>
        <dbReference type="ChEBI" id="CHEBI:15740"/>
        <dbReference type="ChEBI" id="CHEBI:16526"/>
        <dbReference type="ChEBI" id="CHEBI:57540"/>
        <dbReference type="ChEBI" id="CHEBI:57945"/>
        <dbReference type="EC" id="1.17.1.9"/>
    </reaction>
</comment>
<comment type="cofactor">
    <cofactor evidence="1">
        <name>[2Fe-2S] cluster</name>
        <dbReference type="ChEBI" id="CHEBI:190135"/>
    </cofactor>
    <text evidence="1">Binds 1 [2Fe-2S] cluster.</text>
</comment>
<comment type="cofactor">
    <cofactor evidence="1">
        <name>[4Fe-4S] cluster</name>
        <dbReference type="ChEBI" id="CHEBI:49883"/>
    </cofactor>
    <text evidence="1">Binds 4 [4Fe-4S] clusters.</text>
</comment>
<comment type="cofactor">
    <cofactor evidence="1">
        <name>Mo-bis(molybdopterin guanine dinucleotide)</name>
        <dbReference type="ChEBI" id="CHEBI:60539"/>
    </cofactor>
    <text evidence="1">Binds 1 molybdenum-bis(molybdopterin guanine dinucleotide) (Mo-bis-MGD) cofactor per subunit.</text>
</comment>
<comment type="similarity">
    <text evidence="6">In the C-terminal section; belongs to the prokaryotic molybdopterin-containing oxidoreductase family.</text>
</comment>
<gene>
    <name type="ordered locus">SAB2186c</name>
</gene>
<sequence length="984" mass="111309">MQEHLVVTLDGKDYLVEPGTNLLEFIKSQDTFVPSICYNESMGPIQTCDTCTVEIDGKIERSCSTVIDRPMTVNTVNNDVKDAQKEALDRILEKHMLYCTVCDYNNGDCEIHNTMDAWGLQHQTYEYKEKPYEKDYGPFYRYDPNQCILCGRCVEACQDIEVNETIRIDWDREHPRVIWDNDVPINESSCVSCGQCATVCPCNAMMEVNMEGNAGYMTDTEPGSLAAMVDLTKKAEPGYGPLFAISDSEAEMRKERIKKTKTVCTYCGVGCSFEVWTKDREILKVQPSHDSPANKIATCVKGKFSWGHINSDQRLTKPLVRKNGEFHEVEWDEALNVIADNFTSIKEKYGPDALSFISSSKATNEESYLMQKLARQVIGTNNVDNCSRYCQAPATKGLFRTVGHGGDSGSIEDLEKAAMSVLIGTNTAEAHPVIASRMKRAQKLFGQKIHVFDIRKHEMAERADRFYQPKPGTDLAWLSAVTKYIIDHDLHDKAFIEEWVEDFDEYYKSLETFTMAFAEEATGIPEAELIKFAEECAKAESVVICWAMGITQQDIGSDSSTAISNLLLVTGNYRRPSTGAYPLRGHNNVQGCSDMGSMPDKITGYQSIEADDIRAKFEKEYGVKLNPKVGKDNHEMVEGVHDGEIHSLYLYGEDTGIVDSNINFVQAAFENLDFMVVQDEFLTFTATFADVVLPASPSLEKDGTFTNTERRIQRLYQALKPLGESKPDWKIFQAIANKLGFDWNYKHPSEIMDEIARLTPLYAGVSYERLEGFNSLQWPVHPDGTDEPILYLEGFNFDNGKAKLFPLSFDNYFKQDEVYDIHVNNGRLLEHFHEGNMTYQTPMIKYKVPRAFVEISPELAEDRGIHEGAEVKLISETGEAVLQVHVTDRVKGKEIYIPLNNDAMENGDLGAINLLTNSDVDQYTDTPSYKRTSCRLEVIAKRGKSPLNPNNFRVNKKRHPQYSVQVQKKWERPDYVFPGNQVDK</sequence>
<organism>
    <name type="scientific">Staphylococcus aureus (strain bovine RF122 / ET3-1)</name>
    <dbReference type="NCBI Taxonomy" id="273036"/>
    <lineage>
        <taxon>Bacteria</taxon>
        <taxon>Bacillati</taxon>
        <taxon>Bacillota</taxon>
        <taxon>Bacilli</taxon>
        <taxon>Bacillales</taxon>
        <taxon>Staphylococcaceae</taxon>
        <taxon>Staphylococcus</taxon>
    </lineage>
</organism>
<evidence type="ECO:0000250" key="1"/>
<evidence type="ECO:0000255" key="2">
    <source>
        <dbReference type="PROSITE-ProRule" id="PRU00465"/>
    </source>
</evidence>
<evidence type="ECO:0000255" key="3">
    <source>
        <dbReference type="PROSITE-ProRule" id="PRU00711"/>
    </source>
</evidence>
<evidence type="ECO:0000255" key="4">
    <source>
        <dbReference type="PROSITE-ProRule" id="PRU01004"/>
    </source>
</evidence>
<evidence type="ECO:0000255" key="5">
    <source>
        <dbReference type="PROSITE-ProRule" id="PRU01184"/>
    </source>
</evidence>
<evidence type="ECO:0000305" key="6"/>